<accession>Q93X62</accession>
<organism>
    <name type="scientific">Brassica napus</name>
    <name type="common">Rape</name>
    <dbReference type="NCBI Taxonomy" id="3708"/>
    <lineage>
        <taxon>Eukaryota</taxon>
        <taxon>Viridiplantae</taxon>
        <taxon>Streptophyta</taxon>
        <taxon>Embryophyta</taxon>
        <taxon>Tracheophyta</taxon>
        <taxon>Spermatophyta</taxon>
        <taxon>Magnoliopsida</taxon>
        <taxon>eudicotyledons</taxon>
        <taxon>Gunneridae</taxon>
        <taxon>Pentapetalae</taxon>
        <taxon>rosids</taxon>
        <taxon>malvids</taxon>
        <taxon>Brassicales</taxon>
        <taxon>Brassicaceae</taxon>
        <taxon>Brassiceae</taxon>
        <taxon>Brassica</taxon>
    </lineage>
</organism>
<proteinExistence type="evidence at protein level"/>
<gene>
    <name type="primary">gbkr1</name>
</gene>
<keyword id="KW-0002">3D-structure</keyword>
<keyword id="KW-0150">Chloroplast</keyword>
<keyword id="KW-0275">Fatty acid biosynthesis</keyword>
<keyword id="KW-0276">Fatty acid metabolism</keyword>
<keyword id="KW-0444">Lipid biosynthesis</keyword>
<keyword id="KW-0443">Lipid metabolism</keyword>
<keyword id="KW-0521">NADP</keyword>
<keyword id="KW-0560">Oxidoreductase</keyword>
<keyword id="KW-0934">Plastid</keyword>
<keyword id="KW-0809">Transit peptide</keyword>
<dbReference type="EC" id="1.1.1.100"/>
<dbReference type="EMBL" id="AJ243091">
    <property type="protein sequence ID" value="CAC41370.1"/>
    <property type="molecule type" value="Genomic_DNA"/>
</dbReference>
<dbReference type="RefSeq" id="XP_013662543.1">
    <property type="nucleotide sequence ID" value="XM_013807089.1"/>
</dbReference>
<dbReference type="PDB" id="1EDO">
    <property type="method" value="X-ray"/>
    <property type="resolution" value="2.30 A"/>
    <property type="chains" value="A=77-320"/>
</dbReference>
<dbReference type="PDB" id="2CDH">
    <property type="method" value="X-ray"/>
    <property type="resolution" value="4.20 A"/>
    <property type="chains" value="G/H/I/J/K/L=77-320"/>
</dbReference>
<dbReference type="PDBsum" id="1EDO"/>
<dbReference type="PDBsum" id="2CDH"/>
<dbReference type="SMR" id="Q93X62"/>
<dbReference type="EnsemblPlants" id="CDY27597">
    <property type="protein sequence ID" value="CDY27597"/>
    <property type="gene ID" value="GSBRNA2T00038341001"/>
</dbReference>
<dbReference type="GeneID" id="106367337"/>
<dbReference type="Gramene" id="CDY27597">
    <property type="protein sequence ID" value="CDY27597"/>
    <property type="gene ID" value="GSBRNA2T00038341001"/>
</dbReference>
<dbReference type="KEGG" id="bna:106367337"/>
<dbReference type="OMA" id="NYQTCYN"/>
<dbReference type="OrthoDB" id="1393670at2759"/>
<dbReference type="UniPathway" id="UPA00094"/>
<dbReference type="EvolutionaryTrace" id="Q93X62"/>
<dbReference type="GO" id="GO:0009507">
    <property type="term" value="C:chloroplast"/>
    <property type="evidence" value="ECO:0007669"/>
    <property type="project" value="UniProtKB-SubCell"/>
</dbReference>
<dbReference type="GO" id="GO:0004316">
    <property type="term" value="F:3-oxoacyl-[acyl-carrier-protein] reductase (NADPH) activity"/>
    <property type="evidence" value="ECO:0007669"/>
    <property type="project" value="UniProtKB-EC"/>
</dbReference>
<dbReference type="GO" id="GO:0051287">
    <property type="term" value="F:NAD binding"/>
    <property type="evidence" value="ECO:0007669"/>
    <property type="project" value="InterPro"/>
</dbReference>
<dbReference type="GO" id="GO:0006633">
    <property type="term" value="P:fatty acid biosynthetic process"/>
    <property type="evidence" value="ECO:0007669"/>
    <property type="project" value="UniProtKB-UniPathway"/>
</dbReference>
<dbReference type="CDD" id="cd05333">
    <property type="entry name" value="BKR_SDR_c"/>
    <property type="match status" value="1"/>
</dbReference>
<dbReference type="FunFam" id="3.40.50.720:FF:000194">
    <property type="entry name" value="3-oxoacyl-[acyl-carrier-protein] reductase, chloroplastic"/>
    <property type="match status" value="1"/>
</dbReference>
<dbReference type="Gene3D" id="3.40.50.720">
    <property type="entry name" value="NAD(P)-binding Rossmann-like Domain"/>
    <property type="match status" value="1"/>
</dbReference>
<dbReference type="InterPro" id="IPR011284">
    <property type="entry name" value="3oxo_ACP_reduc"/>
</dbReference>
<dbReference type="InterPro" id="IPR036291">
    <property type="entry name" value="NAD(P)-bd_dom_sf"/>
</dbReference>
<dbReference type="InterPro" id="IPR020904">
    <property type="entry name" value="Sc_DH/Rdtase_CS"/>
</dbReference>
<dbReference type="InterPro" id="IPR050259">
    <property type="entry name" value="SDR"/>
</dbReference>
<dbReference type="InterPro" id="IPR002347">
    <property type="entry name" value="SDR_fam"/>
</dbReference>
<dbReference type="NCBIfam" id="TIGR01830">
    <property type="entry name" value="3oxo_ACP_reduc"/>
    <property type="match status" value="1"/>
</dbReference>
<dbReference type="NCBIfam" id="NF005559">
    <property type="entry name" value="PRK07231.1"/>
    <property type="match status" value="1"/>
</dbReference>
<dbReference type="NCBIfam" id="NF009466">
    <property type="entry name" value="PRK12826.1-2"/>
    <property type="match status" value="1"/>
</dbReference>
<dbReference type="PANTHER" id="PTHR42879">
    <property type="entry name" value="3-OXOACYL-(ACYL-CARRIER-PROTEIN) REDUCTASE"/>
    <property type="match status" value="1"/>
</dbReference>
<dbReference type="PANTHER" id="PTHR42879:SF2">
    <property type="entry name" value="3-OXOACYL-[ACYL-CARRIER-PROTEIN] REDUCTASE FABG"/>
    <property type="match status" value="1"/>
</dbReference>
<dbReference type="Pfam" id="PF00106">
    <property type="entry name" value="adh_short"/>
    <property type="match status" value="1"/>
</dbReference>
<dbReference type="PRINTS" id="PR00081">
    <property type="entry name" value="GDHRDH"/>
</dbReference>
<dbReference type="PRINTS" id="PR00080">
    <property type="entry name" value="SDRFAMILY"/>
</dbReference>
<dbReference type="SMART" id="SM00822">
    <property type="entry name" value="PKS_KR"/>
    <property type="match status" value="1"/>
</dbReference>
<dbReference type="SUPFAM" id="SSF51735">
    <property type="entry name" value="NAD(P)-binding Rossmann-fold domains"/>
    <property type="match status" value="1"/>
</dbReference>
<dbReference type="PROSITE" id="PS00061">
    <property type="entry name" value="ADH_SHORT"/>
    <property type="match status" value="1"/>
</dbReference>
<sequence>MATTVAATKLTSLKAVKKLGFREIRQVRQWSPLQSAMPHFGMLRCGSRQSFATSTVVKAQATAVEQSTGEAVPKVESPVVVVTGASRGIGKAIALSLGKAGCKVLVNYARSAKEAEEVSKQIEAYGGQAITFGGDVSKEADVEAMMKTAIDAWGTIDVVVNNAGITRDTLLIRMKKSQWDEVIDLNLTGVFLCTQAATKIMMKKRKGRIINIASVVGLIGNIGQANYAAAKAGVIGFSKTAAREGASRNINVNVVCPGFIASDMTAKLGEDMEKKILGTIPLGRYGQPEDVAGLVEFLALSPAASYITGQAFTIDGGIAI</sequence>
<protein>
    <recommendedName>
        <fullName>3-oxoacyl-[acyl-carrier-protein] reductase 1, chloroplastic</fullName>
        <ecNumber>1.1.1.100</ecNumber>
    </recommendedName>
    <alternativeName>
        <fullName>3-ketoacyl-acyl carrier protein reductase 1</fullName>
    </alternativeName>
    <alternativeName>
        <fullName>Beta-keto acyl-carrier protein reductase 1</fullName>
    </alternativeName>
</protein>
<comment type="catalytic activity">
    <reaction>
        <text>a (3R)-hydroxyacyl-[ACP] + NADP(+) = a 3-oxoacyl-[ACP] + NADPH + H(+)</text>
        <dbReference type="Rhea" id="RHEA:17397"/>
        <dbReference type="Rhea" id="RHEA-COMP:9916"/>
        <dbReference type="Rhea" id="RHEA-COMP:9945"/>
        <dbReference type="ChEBI" id="CHEBI:15378"/>
        <dbReference type="ChEBI" id="CHEBI:57783"/>
        <dbReference type="ChEBI" id="CHEBI:58349"/>
        <dbReference type="ChEBI" id="CHEBI:78776"/>
        <dbReference type="ChEBI" id="CHEBI:78827"/>
        <dbReference type="EC" id="1.1.1.100"/>
    </reaction>
</comment>
<comment type="pathway">
    <text>Lipid metabolism; fatty acid biosynthesis.</text>
</comment>
<comment type="subunit">
    <text>Homotetramer.</text>
</comment>
<comment type="subcellular location">
    <subcellularLocation>
        <location evidence="1">Plastid</location>
        <location evidence="1">Chloroplast</location>
    </subcellularLocation>
    <text evidence="1">And non-photosynthetic plastids.</text>
</comment>
<comment type="similarity">
    <text evidence="3">Belongs to the short-chain dehydrogenases/reductases (SDR) family.</text>
</comment>
<reference key="1">
    <citation type="submission" date="2001-06" db="EMBL/GenBank/DDBJ databases">
        <authorList>
            <person name="McDonald F.S."/>
            <person name="White A.J."/>
            <person name="Elborough K.M."/>
            <person name="Slabas A.R."/>
        </authorList>
    </citation>
    <scope>NUCLEOTIDE SEQUENCE [GENOMIC DNA]</scope>
    <source>
        <strain>cv. Jet neuf</strain>
        <tissue>Leaf</tissue>
    </source>
</reference>
<reference key="2">
    <citation type="journal article" date="2000" name="Acta Crystallogr. D">
        <title>Crystallization of the NADP-dependent beta-keto acyl-carrier protein reductase from Brassica napus.</title>
        <authorList>
            <person name="Fisher M."/>
            <person name="Sedelnikova S.E."/>
            <person name="Martindale W."/>
            <person name="Thomas N.C."/>
            <person name="Simon J.W."/>
            <person name="Slabas A.R."/>
            <person name="Rafferty J.B."/>
        </authorList>
    </citation>
    <scope>CRYSTALLIZATION</scope>
</reference>
<reference key="3">
    <citation type="journal article" date="2000" name="Structure">
        <title>The X-ray structure of Brassica napus beta-keto acyl carrier protein reductase and its implications for substrate binding and catalysis.</title>
        <authorList>
            <person name="Fisher M."/>
            <person name="Kroon J.T.M."/>
            <person name="Martindale W."/>
            <person name="Stuitje A.R."/>
            <person name="Slabas A.R."/>
            <person name="Rafferty J.B."/>
        </authorList>
    </citation>
    <scope>X-RAY CRYSTALLOGRAPHY (2.3 ANGSTROMS) OF 77-320</scope>
</reference>
<evidence type="ECO:0000250" key="1"/>
<evidence type="ECO:0000255" key="2"/>
<evidence type="ECO:0000305" key="3"/>
<evidence type="ECO:0007829" key="4">
    <source>
        <dbReference type="PDB" id="1EDO"/>
    </source>
</evidence>
<feature type="transit peptide" description="Chloroplast" evidence="2">
    <location>
        <begin position="1"/>
        <end position="60"/>
    </location>
</feature>
<feature type="chain" id="PRO_0000031977" description="3-oxoacyl-[acyl-carrier-protein] reductase 1, chloroplastic">
    <location>
        <begin position="61"/>
        <end position="320"/>
    </location>
</feature>
<feature type="active site" description="Proton acceptor">
    <location>
        <position position="227"/>
    </location>
</feature>
<feature type="binding site" evidence="1">
    <location>
        <begin position="82"/>
        <end position="106"/>
    </location>
    <ligand>
        <name>NADP(+)</name>
        <dbReference type="ChEBI" id="CHEBI:58349"/>
    </ligand>
</feature>
<feature type="binding site">
    <location>
        <position position="214"/>
    </location>
    <ligand>
        <name>substrate</name>
    </ligand>
</feature>
<feature type="strand" evidence="4">
    <location>
        <begin position="79"/>
        <end position="82"/>
    </location>
</feature>
<feature type="helix" evidence="4">
    <location>
        <begin position="88"/>
        <end position="99"/>
    </location>
</feature>
<feature type="strand" evidence="4">
    <location>
        <begin position="103"/>
        <end position="110"/>
    </location>
</feature>
<feature type="helix" evidence="4">
    <location>
        <begin position="112"/>
        <end position="125"/>
    </location>
</feature>
<feature type="strand" evidence="4">
    <location>
        <begin position="128"/>
        <end position="133"/>
    </location>
</feature>
<feature type="helix" evidence="4">
    <location>
        <begin position="139"/>
        <end position="152"/>
    </location>
</feature>
<feature type="strand" evidence="4">
    <location>
        <begin position="157"/>
        <end position="161"/>
    </location>
</feature>
<feature type="helix" evidence="4">
    <location>
        <begin position="171"/>
        <end position="173"/>
    </location>
</feature>
<feature type="helix" evidence="4">
    <location>
        <begin position="176"/>
        <end position="186"/>
    </location>
</feature>
<feature type="helix" evidence="4">
    <location>
        <begin position="188"/>
        <end position="204"/>
    </location>
</feature>
<feature type="strand" evidence="4">
    <location>
        <begin position="207"/>
        <end position="212"/>
    </location>
</feature>
<feature type="helix" evidence="4">
    <location>
        <begin position="216"/>
        <end position="219"/>
    </location>
</feature>
<feature type="helix" evidence="4">
    <location>
        <begin position="225"/>
        <end position="246"/>
    </location>
</feature>
<feature type="turn" evidence="4">
    <location>
        <begin position="247"/>
        <end position="249"/>
    </location>
</feature>
<feature type="strand" evidence="4">
    <location>
        <begin position="250"/>
        <end position="257"/>
    </location>
</feature>
<feature type="helix" evidence="4">
    <location>
        <begin position="263"/>
        <end position="266"/>
    </location>
</feature>
<feature type="helix" evidence="4">
    <location>
        <begin position="270"/>
        <end position="277"/>
    </location>
</feature>
<feature type="helix" evidence="4">
    <location>
        <begin position="288"/>
        <end position="300"/>
    </location>
</feature>
<feature type="helix" evidence="4">
    <location>
        <begin position="303"/>
        <end position="306"/>
    </location>
</feature>
<feature type="strand" evidence="4">
    <location>
        <begin position="311"/>
        <end position="315"/>
    </location>
</feature>
<feature type="turn" evidence="4">
    <location>
        <begin position="316"/>
        <end position="319"/>
    </location>
</feature>
<name>FABG1_BRANA</name>